<feature type="chain" id="PRO_1000124963" description="Nucleoside diphosphate kinase">
    <location>
        <begin position="1"/>
        <end position="143"/>
    </location>
</feature>
<feature type="active site" description="Pros-phosphohistidine intermediate" evidence="1">
    <location>
        <position position="117"/>
    </location>
</feature>
<feature type="binding site" evidence="1">
    <location>
        <position position="11"/>
    </location>
    <ligand>
        <name>ATP</name>
        <dbReference type="ChEBI" id="CHEBI:30616"/>
    </ligand>
</feature>
<feature type="binding site" evidence="1">
    <location>
        <position position="59"/>
    </location>
    <ligand>
        <name>ATP</name>
        <dbReference type="ChEBI" id="CHEBI:30616"/>
    </ligand>
</feature>
<feature type="binding site" evidence="1">
    <location>
        <position position="87"/>
    </location>
    <ligand>
        <name>ATP</name>
        <dbReference type="ChEBI" id="CHEBI:30616"/>
    </ligand>
</feature>
<feature type="binding site" evidence="1">
    <location>
        <position position="93"/>
    </location>
    <ligand>
        <name>ATP</name>
        <dbReference type="ChEBI" id="CHEBI:30616"/>
    </ligand>
</feature>
<feature type="binding site" evidence="1">
    <location>
        <position position="104"/>
    </location>
    <ligand>
        <name>ATP</name>
        <dbReference type="ChEBI" id="CHEBI:30616"/>
    </ligand>
</feature>
<feature type="binding site" evidence="1">
    <location>
        <position position="114"/>
    </location>
    <ligand>
        <name>ATP</name>
        <dbReference type="ChEBI" id="CHEBI:30616"/>
    </ligand>
</feature>
<protein>
    <recommendedName>
        <fullName evidence="1">Nucleoside diphosphate kinase</fullName>
        <shortName evidence="1">NDK</shortName>
        <shortName evidence="1">NDP kinase</shortName>
        <ecNumber evidence="1">2.7.4.6</ecNumber>
    </recommendedName>
    <alternativeName>
        <fullName evidence="1">Nucleoside-2-P kinase</fullName>
    </alternativeName>
</protein>
<accession>B1LNH3</accession>
<comment type="function">
    <text evidence="1">Major role in the synthesis of nucleoside triphosphates other than ATP. The ATP gamma phosphate is transferred to the NDP beta phosphate via a ping-pong mechanism, using a phosphorylated active-site intermediate.</text>
</comment>
<comment type="catalytic activity">
    <reaction evidence="1">
        <text>a 2'-deoxyribonucleoside 5'-diphosphate + ATP = a 2'-deoxyribonucleoside 5'-triphosphate + ADP</text>
        <dbReference type="Rhea" id="RHEA:44640"/>
        <dbReference type="ChEBI" id="CHEBI:30616"/>
        <dbReference type="ChEBI" id="CHEBI:61560"/>
        <dbReference type="ChEBI" id="CHEBI:73316"/>
        <dbReference type="ChEBI" id="CHEBI:456216"/>
        <dbReference type="EC" id="2.7.4.6"/>
    </reaction>
</comment>
<comment type="catalytic activity">
    <reaction evidence="1">
        <text>a ribonucleoside 5'-diphosphate + ATP = a ribonucleoside 5'-triphosphate + ADP</text>
        <dbReference type="Rhea" id="RHEA:18113"/>
        <dbReference type="ChEBI" id="CHEBI:30616"/>
        <dbReference type="ChEBI" id="CHEBI:57930"/>
        <dbReference type="ChEBI" id="CHEBI:61557"/>
        <dbReference type="ChEBI" id="CHEBI:456216"/>
        <dbReference type="EC" id="2.7.4.6"/>
    </reaction>
</comment>
<comment type="cofactor">
    <cofactor evidence="1">
        <name>Mg(2+)</name>
        <dbReference type="ChEBI" id="CHEBI:18420"/>
    </cofactor>
</comment>
<comment type="subunit">
    <text evidence="1">Homotetramer.</text>
</comment>
<comment type="subcellular location">
    <subcellularLocation>
        <location evidence="1">Cytoplasm</location>
    </subcellularLocation>
</comment>
<comment type="similarity">
    <text evidence="1">Belongs to the NDK family.</text>
</comment>
<dbReference type="EC" id="2.7.4.6" evidence="1"/>
<dbReference type="EMBL" id="CP000970">
    <property type="protein sequence ID" value="ACB16255.1"/>
    <property type="molecule type" value="Genomic_DNA"/>
</dbReference>
<dbReference type="RefSeq" id="WP_000963841.1">
    <property type="nucleotide sequence ID" value="NC_010498.1"/>
</dbReference>
<dbReference type="SMR" id="B1LNH3"/>
<dbReference type="GeneID" id="86947407"/>
<dbReference type="KEGG" id="ecm:EcSMS35_2670"/>
<dbReference type="HOGENOM" id="CLU_060216_8_1_6"/>
<dbReference type="Proteomes" id="UP000007011">
    <property type="component" value="Chromosome"/>
</dbReference>
<dbReference type="GO" id="GO:0005737">
    <property type="term" value="C:cytoplasm"/>
    <property type="evidence" value="ECO:0007669"/>
    <property type="project" value="UniProtKB-SubCell"/>
</dbReference>
<dbReference type="GO" id="GO:0005524">
    <property type="term" value="F:ATP binding"/>
    <property type="evidence" value="ECO:0007669"/>
    <property type="project" value="UniProtKB-UniRule"/>
</dbReference>
<dbReference type="GO" id="GO:0046872">
    <property type="term" value="F:metal ion binding"/>
    <property type="evidence" value="ECO:0007669"/>
    <property type="project" value="UniProtKB-KW"/>
</dbReference>
<dbReference type="GO" id="GO:0004550">
    <property type="term" value="F:nucleoside diphosphate kinase activity"/>
    <property type="evidence" value="ECO:0007669"/>
    <property type="project" value="UniProtKB-UniRule"/>
</dbReference>
<dbReference type="GO" id="GO:0006241">
    <property type="term" value="P:CTP biosynthetic process"/>
    <property type="evidence" value="ECO:0007669"/>
    <property type="project" value="UniProtKB-UniRule"/>
</dbReference>
<dbReference type="GO" id="GO:0006183">
    <property type="term" value="P:GTP biosynthetic process"/>
    <property type="evidence" value="ECO:0007669"/>
    <property type="project" value="UniProtKB-UniRule"/>
</dbReference>
<dbReference type="GO" id="GO:0006228">
    <property type="term" value="P:UTP biosynthetic process"/>
    <property type="evidence" value="ECO:0007669"/>
    <property type="project" value="UniProtKB-UniRule"/>
</dbReference>
<dbReference type="CDD" id="cd04413">
    <property type="entry name" value="NDPk_I"/>
    <property type="match status" value="1"/>
</dbReference>
<dbReference type="FunFam" id="3.30.70.141:FF:000001">
    <property type="entry name" value="Nucleoside diphosphate kinase"/>
    <property type="match status" value="1"/>
</dbReference>
<dbReference type="Gene3D" id="3.30.70.141">
    <property type="entry name" value="Nucleoside diphosphate kinase-like domain"/>
    <property type="match status" value="1"/>
</dbReference>
<dbReference type="HAMAP" id="MF_00451">
    <property type="entry name" value="NDP_kinase"/>
    <property type="match status" value="1"/>
</dbReference>
<dbReference type="InterPro" id="IPR034907">
    <property type="entry name" value="NDK-like_dom"/>
</dbReference>
<dbReference type="InterPro" id="IPR036850">
    <property type="entry name" value="NDK-like_dom_sf"/>
</dbReference>
<dbReference type="InterPro" id="IPR001564">
    <property type="entry name" value="Nucleoside_diP_kinase"/>
</dbReference>
<dbReference type="InterPro" id="IPR023005">
    <property type="entry name" value="Nucleoside_diP_kinase_AS"/>
</dbReference>
<dbReference type="NCBIfam" id="NF001908">
    <property type="entry name" value="PRK00668.1"/>
    <property type="match status" value="1"/>
</dbReference>
<dbReference type="PANTHER" id="PTHR46161">
    <property type="entry name" value="NUCLEOSIDE DIPHOSPHATE KINASE"/>
    <property type="match status" value="1"/>
</dbReference>
<dbReference type="PANTHER" id="PTHR46161:SF3">
    <property type="entry name" value="NUCLEOSIDE DIPHOSPHATE KINASE DDB_G0292928-RELATED"/>
    <property type="match status" value="1"/>
</dbReference>
<dbReference type="Pfam" id="PF00334">
    <property type="entry name" value="NDK"/>
    <property type="match status" value="1"/>
</dbReference>
<dbReference type="PRINTS" id="PR01243">
    <property type="entry name" value="NUCDPKINASE"/>
</dbReference>
<dbReference type="SMART" id="SM00562">
    <property type="entry name" value="NDK"/>
    <property type="match status" value="1"/>
</dbReference>
<dbReference type="SUPFAM" id="SSF54919">
    <property type="entry name" value="Nucleoside diphosphate kinase, NDK"/>
    <property type="match status" value="1"/>
</dbReference>
<dbReference type="PROSITE" id="PS00469">
    <property type="entry name" value="NDPK"/>
    <property type="match status" value="1"/>
</dbReference>
<dbReference type="PROSITE" id="PS51374">
    <property type="entry name" value="NDPK_LIKE"/>
    <property type="match status" value="1"/>
</dbReference>
<reference key="1">
    <citation type="journal article" date="2008" name="J. Bacteriol.">
        <title>Insights into the environmental resistance gene pool from the genome sequence of the multidrug-resistant environmental isolate Escherichia coli SMS-3-5.</title>
        <authorList>
            <person name="Fricke W.F."/>
            <person name="Wright M.S."/>
            <person name="Lindell A.H."/>
            <person name="Harkins D.M."/>
            <person name="Baker-Austin C."/>
            <person name="Ravel J."/>
            <person name="Stepanauskas R."/>
        </authorList>
    </citation>
    <scope>NUCLEOTIDE SEQUENCE [LARGE SCALE GENOMIC DNA]</scope>
    <source>
        <strain>SMS-3-5 / SECEC</strain>
    </source>
</reference>
<organism>
    <name type="scientific">Escherichia coli (strain SMS-3-5 / SECEC)</name>
    <dbReference type="NCBI Taxonomy" id="439855"/>
    <lineage>
        <taxon>Bacteria</taxon>
        <taxon>Pseudomonadati</taxon>
        <taxon>Pseudomonadota</taxon>
        <taxon>Gammaproteobacteria</taxon>
        <taxon>Enterobacterales</taxon>
        <taxon>Enterobacteriaceae</taxon>
        <taxon>Escherichia</taxon>
    </lineage>
</organism>
<sequence length="143" mass="15436">MAIERTFSIIKPNAVAKNVIGSIFARFEAAGFKIVGTKMLHLTVEQARGFYAEHDGKPFFDGLVEFMTSGPIVVSVLEGENAVQRHRDLLGATNPANALAGTLRADYADSLTENGTHGSDSVESAAREIAYFFGEGEVCPRTR</sequence>
<keyword id="KW-0067">ATP-binding</keyword>
<keyword id="KW-0963">Cytoplasm</keyword>
<keyword id="KW-0418">Kinase</keyword>
<keyword id="KW-0460">Magnesium</keyword>
<keyword id="KW-0479">Metal-binding</keyword>
<keyword id="KW-0546">Nucleotide metabolism</keyword>
<keyword id="KW-0547">Nucleotide-binding</keyword>
<keyword id="KW-0597">Phosphoprotein</keyword>
<keyword id="KW-0808">Transferase</keyword>
<name>NDK_ECOSM</name>
<gene>
    <name evidence="1" type="primary">ndk</name>
    <name type="ordered locus">EcSMS35_2670</name>
</gene>
<evidence type="ECO:0000255" key="1">
    <source>
        <dbReference type="HAMAP-Rule" id="MF_00451"/>
    </source>
</evidence>
<proteinExistence type="inferred from homology"/>